<reference key="1">
    <citation type="journal article" date="2006" name="Proc. Natl. Acad. Sci. U.S.A.">
        <title>The complete genome sequence of a chronic atrophic gastritis Helicobacter pylori strain: evolution during disease progression.</title>
        <authorList>
            <person name="Oh J.D."/>
            <person name="Kling-Baeckhed H."/>
            <person name="Giannakis M."/>
            <person name="Xu J."/>
            <person name="Fulton R.S."/>
            <person name="Fulton L.A."/>
            <person name="Cordum H.S."/>
            <person name="Wang C."/>
            <person name="Elliott G."/>
            <person name="Edwards J."/>
            <person name="Mardis E.R."/>
            <person name="Engstrand L.G."/>
            <person name="Gordon J.I."/>
        </authorList>
    </citation>
    <scope>NUCLEOTIDE SEQUENCE [LARGE SCALE GENOMIC DNA]</scope>
    <source>
        <strain>HPAG1</strain>
    </source>
</reference>
<accession>Q1CV00</accession>
<feature type="chain" id="PRO_1000022977" description="Shikimate kinase">
    <location>
        <begin position="1"/>
        <end position="162"/>
    </location>
</feature>
<feature type="binding site" evidence="1">
    <location>
        <begin position="11"/>
        <end position="16"/>
    </location>
    <ligand>
        <name>ATP</name>
        <dbReference type="ChEBI" id="CHEBI:30616"/>
    </ligand>
</feature>
<feature type="binding site" evidence="1">
    <location>
        <position position="15"/>
    </location>
    <ligand>
        <name>Mg(2+)</name>
        <dbReference type="ChEBI" id="CHEBI:18420"/>
    </ligand>
</feature>
<feature type="binding site" evidence="1">
    <location>
        <position position="33"/>
    </location>
    <ligand>
        <name>substrate</name>
    </ligand>
</feature>
<feature type="binding site" evidence="1">
    <location>
        <position position="57"/>
    </location>
    <ligand>
        <name>substrate</name>
    </ligand>
</feature>
<feature type="binding site" evidence="1">
    <location>
        <position position="80"/>
    </location>
    <ligand>
        <name>substrate</name>
    </ligand>
</feature>
<feature type="binding site" evidence="1">
    <location>
        <position position="116"/>
    </location>
    <ligand>
        <name>ATP</name>
        <dbReference type="ChEBI" id="CHEBI:30616"/>
    </ligand>
</feature>
<feature type="binding site" evidence="1">
    <location>
        <position position="132"/>
    </location>
    <ligand>
        <name>substrate</name>
    </ligand>
</feature>
<keyword id="KW-0028">Amino-acid biosynthesis</keyword>
<keyword id="KW-0057">Aromatic amino acid biosynthesis</keyword>
<keyword id="KW-0067">ATP-binding</keyword>
<keyword id="KW-0963">Cytoplasm</keyword>
<keyword id="KW-0418">Kinase</keyword>
<keyword id="KW-0460">Magnesium</keyword>
<keyword id="KW-0479">Metal-binding</keyword>
<keyword id="KW-0547">Nucleotide-binding</keyword>
<keyword id="KW-0808">Transferase</keyword>
<gene>
    <name evidence="1" type="primary">aroK</name>
    <name type="ordered locus">HPAG1_0155</name>
</gene>
<name>AROK_HELPH</name>
<comment type="function">
    <text evidence="1">Catalyzes the specific phosphorylation of the 3-hydroxyl group of shikimic acid using ATP as a cosubstrate.</text>
</comment>
<comment type="catalytic activity">
    <reaction evidence="1">
        <text>shikimate + ATP = 3-phosphoshikimate + ADP + H(+)</text>
        <dbReference type="Rhea" id="RHEA:13121"/>
        <dbReference type="ChEBI" id="CHEBI:15378"/>
        <dbReference type="ChEBI" id="CHEBI:30616"/>
        <dbReference type="ChEBI" id="CHEBI:36208"/>
        <dbReference type="ChEBI" id="CHEBI:145989"/>
        <dbReference type="ChEBI" id="CHEBI:456216"/>
        <dbReference type="EC" id="2.7.1.71"/>
    </reaction>
</comment>
<comment type="cofactor">
    <cofactor evidence="1">
        <name>Mg(2+)</name>
        <dbReference type="ChEBI" id="CHEBI:18420"/>
    </cofactor>
    <text evidence="1">Binds 1 Mg(2+) ion per subunit.</text>
</comment>
<comment type="pathway">
    <text evidence="1">Metabolic intermediate biosynthesis; chorismate biosynthesis; chorismate from D-erythrose 4-phosphate and phosphoenolpyruvate: step 5/7.</text>
</comment>
<comment type="subunit">
    <text evidence="1">Monomer.</text>
</comment>
<comment type="subcellular location">
    <subcellularLocation>
        <location evidence="1">Cytoplasm</location>
    </subcellularLocation>
</comment>
<comment type="similarity">
    <text evidence="1">Belongs to the shikimate kinase family.</text>
</comment>
<proteinExistence type="inferred from homology"/>
<evidence type="ECO:0000255" key="1">
    <source>
        <dbReference type="HAMAP-Rule" id="MF_00109"/>
    </source>
</evidence>
<protein>
    <recommendedName>
        <fullName evidence="1">Shikimate kinase</fullName>
        <shortName evidence="1">SK</shortName>
        <ecNumber evidence="1">2.7.1.71</ecNumber>
    </recommendedName>
</protein>
<sequence>MRHLVLIGFMGSGKSSLAQELGLALKLEVLDTDMIISERVGLSVREIFEELGEDNFRMFEKNLIDELKTLKTPHVISTGGGIIMHENLKGLGTTFYLKMDFETLIKRLNQKEREKRPLLNNLTQAKELFEKRQALYEKNASFIIDARGGLNNSLKQVLQFIA</sequence>
<dbReference type="EC" id="2.7.1.71" evidence="1"/>
<dbReference type="EMBL" id="CP000241">
    <property type="protein sequence ID" value="ABF84222.1"/>
    <property type="molecule type" value="Genomic_DNA"/>
</dbReference>
<dbReference type="RefSeq" id="WP_001216264.1">
    <property type="nucleotide sequence ID" value="NC_008086.1"/>
</dbReference>
<dbReference type="SMR" id="Q1CV00"/>
<dbReference type="KEGG" id="hpa:HPAG1_0155"/>
<dbReference type="HOGENOM" id="CLU_057607_4_0_7"/>
<dbReference type="UniPathway" id="UPA00053">
    <property type="reaction ID" value="UER00088"/>
</dbReference>
<dbReference type="GO" id="GO:0005829">
    <property type="term" value="C:cytosol"/>
    <property type="evidence" value="ECO:0007669"/>
    <property type="project" value="TreeGrafter"/>
</dbReference>
<dbReference type="GO" id="GO:0005524">
    <property type="term" value="F:ATP binding"/>
    <property type="evidence" value="ECO:0007669"/>
    <property type="project" value="UniProtKB-UniRule"/>
</dbReference>
<dbReference type="GO" id="GO:0000287">
    <property type="term" value="F:magnesium ion binding"/>
    <property type="evidence" value="ECO:0007669"/>
    <property type="project" value="UniProtKB-UniRule"/>
</dbReference>
<dbReference type="GO" id="GO:0004765">
    <property type="term" value="F:shikimate kinase activity"/>
    <property type="evidence" value="ECO:0007669"/>
    <property type="project" value="UniProtKB-UniRule"/>
</dbReference>
<dbReference type="GO" id="GO:0008652">
    <property type="term" value="P:amino acid biosynthetic process"/>
    <property type="evidence" value="ECO:0007669"/>
    <property type="project" value="UniProtKB-KW"/>
</dbReference>
<dbReference type="GO" id="GO:0009073">
    <property type="term" value="P:aromatic amino acid family biosynthetic process"/>
    <property type="evidence" value="ECO:0007669"/>
    <property type="project" value="UniProtKB-KW"/>
</dbReference>
<dbReference type="GO" id="GO:0009423">
    <property type="term" value="P:chorismate biosynthetic process"/>
    <property type="evidence" value="ECO:0007669"/>
    <property type="project" value="UniProtKB-UniRule"/>
</dbReference>
<dbReference type="CDD" id="cd00464">
    <property type="entry name" value="SK"/>
    <property type="match status" value="1"/>
</dbReference>
<dbReference type="FunFam" id="3.40.50.300:FF:001487">
    <property type="entry name" value="Shikimate kinase"/>
    <property type="match status" value="1"/>
</dbReference>
<dbReference type="Gene3D" id="3.40.50.300">
    <property type="entry name" value="P-loop containing nucleotide triphosphate hydrolases"/>
    <property type="match status" value="1"/>
</dbReference>
<dbReference type="HAMAP" id="MF_00109">
    <property type="entry name" value="Shikimate_kinase"/>
    <property type="match status" value="1"/>
</dbReference>
<dbReference type="InterPro" id="IPR027417">
    <property type="entry name" value="P-loop_NTPase"/>
</dbReference>
<dbReference type="InterPro" id="IPR031322">
    <property type="entry name" value="Shikimate/glucono_kinase"/>
</dbReference>
<dbReference type="InterPro" id="IPR000623">
    <property type="entry name" value="Shikimate_kinase/TSH1"/>
</dbReference>
<dbReference type="InterPro" id="IPR023000">
    <property type="entry name" value="Shikimate_kinase_CS"/>
</dbReference>
<dbReference type="PANTHER" id="PTHR21087">
    <property type="entry name" value="SHIKIMATE KINASE"/>
    <property type="match status" value="1"/>
</dbReference>
<dbReference type="PANTHER" id="PTHR21087:SF16">
    <property type="entry name" value="SHIKIMATE KINASE 1, CHLOROPLASTIC"/>
    <property type="match status" value="1"/>
</dbReference>
<dbReference type="Pfam" id="PF01202">
    <property type="entry name" value="SKI"/>
    <property type="match status" value="1"/>
</dbReference>
<dbReference type="PRINTS" id="PR01100">
    <property type="entry name" value="SHIKIMTKNASE"/>
</dbReference>
<dbReference type="SUPFAM" id="SSF52540">
    <property type="entry name" value="P-loop containing nucleoside triphosphate hydrolases"/>
    <property type="match status" value="1"/>
</dbReference>
<dbReference type="PROSITE" id="PS01128">
    <property type="entry name" value="SHIKIMATE_KINASE"/>
    <property type="match status" value="1"/>
</dbReference>
<organism>
    <name type="scientific">Helicobacter pylori (strain HPAG1)</name>
    <dbReference type="NCBI Taxonomy" id="357544"/>
    <lineage>
        <taxon>Bacteria</taxon>
        <taxon>Pseudomonadati</taxon>
        <taxon>Campylobacterota</taxon>
        <taxon>Epsilonproteobacteria</taxon>
        <taxon>Campylobacterales</taxon>
        <taxon>Helicobacteraceae</taxon>
        <taxon>Helicobacter</taxon>
    </lineage>
</organism>